<protein>
    <recommendedName>
        <fullName evidence="1">Translation initiation factor IF-3</fullName>
    </recommendedName>
</protein>
<gene>
    <name evidence="1" type="primary">infC</name>
    <name type="ordered locus">lin1897</name>
</gene>
<proteinExistence type="inferred from homology"/>
<accession>P0A3L2</accession>
<accession>O53084</accession>
<accession>Q9EUW3</accession>
<sequence>MSKDMLVNDGIRAREVRLIDQDGEQLGVKSKIDALQIAEKANLDLVLVAPTAKPPVARIMDYGKFRFEQQKKDKEARKNQKVIVMKEVRLSPTIDEHDFDTKLRNARKFLEKGDKVKCSIRFKGRAITHKEIGQKVLDRFAKACEDLCTIEQRPKMDGRSMFLVLAPLHEK</sequence>
<keyword id="KW-0963">Cytoplasm</keyword>
<keyword id="KW-0396">Initiation factor</keyword>
<keyword id="KW-0648">Protein biosynthesis</keyword>
<reference key="1">
    <citation type="journal article" date="2001" name="Science">
        <title>Comparative genomics of Listeria species.</title>
        <authorList>
            <person name="Glaser P."/>
            <person name="Frangeul L."/>
            <person name="Buchrieser C."/>
            <person name="Rusniok C."/>
            <person name="Amend A."/>
            <person name="Baquero F."/>
            <person name="Berche P."/>
            <person name="Bloecker H."/>
            <person name="Brandt P."/>
            <person name="Chakraborty T."/>
            <person name="Charbit A."/>
            <person name="Chetouani F."/>
            <person name="Couve E."/>
            <person name="de Daruvar A."/>
            <person name="Dehoux P."/>
            <person name="Domann E."/>
            <person name="Dominguez-Bernal G."/>
            <person name="Duchaud E."/>
            <person name="Durant L."/>
            <person name="Dussurget O."/>
            <person name="Entian K.-D."/>
            <person name="Fsihi H."/>
            <person name="Garcia-del Portillo F."/>
            <person name="Garrido P."/>
            <person name="Gautier L."/>
            <person name="Goebel W."/>
            <person name="Gomez-Lopez N."/>
            <person name="Hain T."/>
            <person name="Hauf J."/>
            <person name="Jackson D."/>
            <person name="Jones L.-M."/>
            <person name="Kaerst U."/>
            <person name="Kreft J."/>
            <person name="Kuhn M."/>
            <person name="Kunst F."/>
            <person name="Kurapkat G."/>
            <person name="Madueno E."/>
            <person name="Maitournam A."/>
            <person name="Mata Vicente J."/>
            <person name="Ng E."/>
            <person name="Nedjari H."/>
            <person name="Nordsiek G."/>
            <person name="Novella S."/>
            <person name="de Pablos B."/>
            <person name="Perez-Diaz J.-C."/>
            <person name="Purcell R."/>
            <person name="Remmel B."/>
            <person name="Rose M."/>
            <person name="Schlueter T."/>
            <person name="Simoes N."/>
            <person name="Tierrez A."/>
            <person name="Vazquez-Boland J.-A."/>
            <person name="Voss H."/>
            <person name="Wehland J."/>
            <person name="Cossart P."/>
        </authorList>
    </citation>
    <scope>NUCLEOTIDE SEQUENCE [LARGE SCALE GENOMIC DNA]</scope>
    <source>
        <strain>ATCC BAA-680 / CLIP 11262</strain>
    </source>
</reference>
<reference key="2">
    <citation type="submission" date="1999-09" db="EMBL/GenBank/DDBJ databases">
        <title>The evolution of virulence determinants in Listeria genus.</title>
        <authorList>
            <person name="Ng E.Y."/>
            <person name="Goebel W."/>
        </authorList>
    </citation>
    <scope>NUCLEOTIDE SEQUENCE [GENOMIC DNA] OF 1-139</scope>
    <source>
        <strain>Serovar 6b</strain>
    </source>
</reference>
<evidence type="ECO:0000255" key="1">
    <source>
        <dbReference type="HAMAP-Rule" id="MF_00080"/>
    </source>
</evidence>
<comment type="function">
    <text evidence="1">IF-3 binds to the 30S ribosomal subunit and shifts the equilibrium between 70S ribosomes and their 50S and 30S subunits in favor of the free subunits, thus enhancing the availability of 30S subunits on which protein synthesis initiation begins.</text>
</comment>
<comment type="subunit">
    <text evidence="1">Monomer.</text>
</comment>
<comment type="subcellular location">
    <subcellularLocation>
        <location evidence="1">Cytoplasm</location>
    </subcellularLocation>
</comment>
<comment type="similarity">
    <text evidence="1">Belongs to the IF-3 family.</text>
</comment>
<dbReference type="EMBL" id="AL596170">
    <property type="protein sequence ID" value="CAC97127.1"/>
    <property type="molecule type" value="Genomic_DNA"/>
</dbReference>
<dbReference type="EMBL" id="AJ249401">
    <property type="protein sequence ID" value="CAC19093.1"/>
    <property type="molecule type" value="Genomic_DNA"/>
</dbReference>
<dbReference type="PIR" id="AG1669">
    <property type="entry name" value="AG1669"/>
</dbReference>
<dbReference type="RefSeq" id="WP_010958948.1">
    <property type="nucleotide sequence ID" value="NC_003212.1"/>
</dbReference>
<dbReference type="SMR" id="P0A3L2"/>
<dbReference type="STRING" id="272626.gene:17566255"/>
<dbReference type="GeneID" id="93239694"/>
<dbReference type="KEGG" id="lin:infC"/>
<dbReference type="eggNOG" id="COG0290">
    <property type="taxonomic scope" value="Bacteria"/>
</dbReference>
<dbReference type="HOGENOM" id="CLU_054919_3_2_9"/>
<dbReference type="OrthoDB" id="9806014at2"/>
<dbReference type="Proteomes" id="UP000002513">
    <property type="component" value="Chromosome"/>
</dbReference>
<dbReference type="GO" id="GO:0005829">
    <property type="term" value="C:cytosol"/>
    <property type="evidence" value="ECO:0007669"/>
    <property type="project" value="TreeGrafter"/>
</dbReference>
<dbReference type="GO" id="GO:0016020">
    <property type="term" value="C:membrane"/>
    <property type="evidence" value="ECO:0007669"/>
    <property type="project" value="TreeGrafter"/>
</dbReference>
<dbReference type="GO" id="GO:0043022">
    <property type="term" value="F:ribosome binding"/>
    <property type="evidence" value="ECO:0007669"/>
    <property type="project" value="TreeGrafter"/>
</dbReference>
<dbReference type="GO" id="GO:0003743">
    <property type="term" value="F:translation initiation factor activity"/>
    <property type="evidence" value="ECO:0007669"/>
    <property type="project" value="UniProtKB-UniRule"/>
</dbReference>
<dbReference type="GO" id="GO:0032790">
    <property type="term" value="P:ribosome disassembly"/>
    <property type="evidence" value="ECO:0007669"/>
    <property type="project" value="TreeGrafter"/>
</dbReference>
<dbReference type="FunFam" id="3.10.20.80:FF:000001">
    <property type="entry name" value="Translation initiation factor IF-3"/>
    <property type="match status" value="1"/>
</dbReference>
<dbReference type="FunFam" id="3.30.110.10:FF:000001">
    <property type="entry name" value="Translation initiation factor IF-3"/>
    <property type="match status" value="1"/>
</dbReference>
<dbReference type="Gene3D" id="3.30.110.10">
    <property type="entry name" value="Translation initiation factor 3 (IF-3), C-terminal domain"/>
    <property type="match status" value="1"/>
</dbReference>
<dbReference type="Gene3D" id="3.10.20.80">
    <property type="entry name" value="Translation initiation factor 3 (IF-3), N-terminal domain"/>
    <property type="match status" value="1"/>
</dbReference>
<dbReference type="HAMAP" id="MF_00080">
    <property type="entry name" value="IF_3"/>
    <property type="match status" value="1"/>
</dbReference>
<dbReference type="InterPro" id="IPR036788">
    <property type="entry name" value="T_IF-3_C_sf"/>
</dbReference>
<dbReference type="InterPro" id="IPR036787">
    <property type="entry name" value="T_IF-3_N_sf"/>
</dbReference>
<dbReference type="InterPro" id="IPR019813">
    <property type="entry name" value="Translation_initiation_fac3_CS"/>
</dbReference>
<dbReference type="InterPro" id="IPR001288">
    <property type="entry name" value="Translation_initiation_fac_3"/>
</dbReference>
<dbReference type="InterPro" id="IPR019815">
    <property type="entry name" value="Translation_initiation_fac_3_C"/>
</dbReference>
<dbReference type="InterPro" id="IPR019814">
    <property type="entry name" value="Translation_initiation_fac_3_N"/>
</dbReference>
<dbReference type="NCBIfam" id="TIGR00168">
    <property type="entry name" value="infC"/>
    <property type="match status" value="1"/>
</dbReference>
<dbReference type="PANTHER" id="PTHR10938">
    <property type="entry name" value="TRANSLATION INITIATION FACTOR IF-3"/>
    <property type="match status" value="1"/>
</dbReference>
<dbReference type="PANTHER" id="PTHR10938:SF0">
    <property type="entry name" value="TRANSLATION INITIATION FACTOR IF-3, MITOCHONDRIAL"/>
    <property type="match status" value="1"/>
</dbReference>
<dbReference type="Pfam" id="PF00707">
    <property type="entry name" value="IF3_C"/>
    <property type="match status" value="1"/>
</dbReference>
<dbReference type="Pfam" id="PF05198">
    <property type="entry name" value="IF3_N"/>
    <property type="match status" value="1"/>
</dbReference>
<dbReference type="SUPFAM" id="SSF55200">
    <property type="entry name" value="Translation initiation factor IF3, C-terminal domain"/>
    <property type="match status" value="1"/>
</dbReference>
<dbReference type="SUPFAM" id="SSF54364">
    <property type="entry name" value="Translation initiation factor IF3, N-terminal domain"/>
    <property type="match status" value="1"/>
</dbReference>
<dbReference type="PROSITE" id="PS00938">
    <property type="entry name" value="IF3"/>
    <property type="match status" value="1"/>
</dbReference>
<name>IF3_LISIN</name>
<organism>
    <name type="scientific">Listeria innocua serovar 6a (strain ATCC BAA-680 / CLIP 11262)</name>
    <dbReference type="NCBI Taxonomy" id="272626"/>
    <lineage>
        <taxon>Bacteria</taxon>
        <taxon>Bacillati</taxon>
        <taxon>Bacillota</taxon>
        <taxon>Bacilli</taxon>
        <taxon>Bacillales</taxon>
        <taxon>Listeriaceae</taxon>
        <taxon>Listeria</taxon>
    </lineage>
</organism>
<feature type="chain" id="PRO_0000177536" description="Translation initiation factor IF-3">
    <location>
        <begin position="1"/>
        <end position="171"/>
    </location>
</feature>